<feature type="chain" id="PRO_0000148523" description="rRNA 2'-O-methyltransferase fibrillarin">
    <location>
        <begin position="1"/>
        <end position="329"/>
    </location>
</feature>
<feature type="region of interest" description="Disordered" evidence="2">
    <location>
        <begin position="1"/>
        <end position="85"/>
    </location>
</feature>
<feature type="compositionally biased region" description="Gly residues" evidence="2">
    <location>
        <begin position="13"/>
        <end position="84"/>
    </location>
</feature>
<feature type="binding site" evidence="1">
    <location>
        <begin position="181"/>
        <end position="182"/>
    </location>
    <ligand>
        <name>S-adenosyl-L-methionine</name>
        <dbReference type="ChEBI" id="CHEBI:59789"/>
    </ligand>
</feature>
<feature type="binding site" evidence="1">
    <location>
        <begin position="200"/>
        <end position="201"/>
    </location>
    <ligand>
        <name>S-adenosyl-L-methionine</name>
        <dbReference type="ChEBI" id="CHEBI:59789"/>
    </ligand>
</feature>
<feature type="binding site" evidence="1">
    <location>
        <begin position="225"/>
        <end position="226"/>
    </location>
    <ligand>
        <name>S-adenosyl-L-methionine</name>
        <dbReference type="ChEBI" id="CHEBI:59789"/>
    </ligand>
</feature>
<feature type="binding site" evidence="1">
    <location>
        <begin position="245"/>
        <end position="248"/>
    </location>
    <ligand>
        <name>S-adenosyl-L-methionine</name>
        <dbReference type="ChEBI" id="CHEBI:59789"/>
    </ligand>
</feature>
<organism>
    <name type="scientific">Debaryomyces hansenii (strain ATCC 36239 / CBS 767 / BCRC 21394 / JCM 1990 / NBRC 0083 / IGC 2968)</name>
    <name type="common">Yeast</name>
    <name type="synonym">Torulaspora hansenii</name>
    <dbReference type="NCBI Taxonomy" id="284592"/>
    <lineage>
        <taxon>Eukaryota</taxon>
        <taxon>Fungi</taxon>
        <taxon>Dikarya</taxon>
        <taxon>Ascomycota</taxon>
        <taxon>Saccharomycotina</taxon>
        <taxon>Pichiomycetes</taxon>
        <taxon>Debaryomycetaceae</taxon>
        <taxon>Debaryomyces</taxon>
    </lineage>
</organism>
<comment type="function">
    <text evidence="1">S-adenosyl-L-methionine-dependent methyltransferase that has the ability to methylate both RNAs and proteins. Involved in pre-rRNA processing. Utilizes the methyl donor S-adenosyl-L-methionine to catalyze the site-specific 2'-hydroxyl methylation of ribose moieties in pre-ribosomal RNA. Site specificity is provided by a guide RNA that base pairs with the substrate. Methylation occurs at a characteristic distance from the sequence involved in base pairing with the guide RNA. Also acts as a protein methyltransferase by mediating methylation of 'Gln-105' of histone H2A (H2AQ105me), a modification that impairs binding of the FACT complex and is specifically present at 35S ribosomal DNA locus (By similarity).</text>
</comment>
<comment type="catalytic activity">
    <reaction>
        <text>L-glutaminyl-[histone H2A] + S-adenosyl-L-methionine = N(5)-methyl-L-glutaminyl-[histone H2A] + S-adenosyl-L-homocysteine + H(+)</text>
        <dbReference type="Rhea" id="RHEA:50904"/>
        <dbReference type="Rhea" id="RHEA-COMP:12837"/>
        <dbReference type="Rhea" id="RHEA-COMP:12839"/>
        <dbReference type="ChEBI" id="CHEBI:15378"/>
        <dbReference type="ChEBI" id="CHEBI:30011"/>
        <dbReference type="ChEBI" id="CHEBI:57856"/>
        <dbReference type="ChEBI" id="CHEBI:59789"/>
        <dbReference type="ChEBI" id="CHEBI:61891"/>
    </reaction>
</comment>
<comment type="subunit">
    <text evidence="1">Component of box C/D small nucleolar ribonucleoprotein (snoRNP) particles that contain SNU13, NOP1, SIK1/NOP56 and NOP58, plus a guide RNA.</text>
</comment>
<comment type="subcellular location">
    <subcellularLocation>
        <location evidence="1">Nucleus</location>
        <location evidence="1">Nucleolus</location>
    </subcellularLocation>
    <text evidence="1">Fibrillar region of the nucleolus.</text>
</comment>
<comment type="PTM">
    <text evidence="1">By homology to other fibrillarins, some or all of the N-terminal domain arginines are modified to asymmetric dimethylarginine (DMA).</text>
</comment>
<comment type="similarity">
    <text evidence="3">Belongs to the methyltransferase superfamily. Fibrillarin family.</text>
</comment>
<keyword id="KW-0488">Methylation</keyword>
<keyword id="KW-0489">Methyltransferase</keyword>
<keyword id="KW-0539">Nucleus</keyword>
<keyword id="KW-1185">Reference proteome</keyword>
<keyword id="KW-0687">Ribonucleoprotein</keyword>
<keyword id="KW-0694">RNA-binding</keyword>
<keyword id="KW-0698">rRNA processing</keyword>
<keyword id="KW-0949">S-adenosyl-L-methionine</keyword>
<keyword id="KW-0808">Transferase</keyword>
<name>FBRL_DEBHA</name>
<evidence type="ECO:0000250" key="1"/>
<evidence type="ECO:0000256" key="2">
    <source>
        <dbReference type="SAM" id="MobiDB-lite"/>
    </source>
</evidence>
<evidence type="ECO:0000305" key="3"/>
<gene>
    <name type="primary">NOP1</name>
    <name type="ordered locus">DEHA2E08712g</name>
</gene>
<protein>
    <recommendedName>
        <fullName>rRNA 2'-O-methyltransferase fibrillarin</fullName>
        <ecNumber>2.1.1.-</ecNumber>
    </recommendedName>
    <alternativeName>
        <fullName>Histone-glutamine methyltransferase</fullName>
    </alternativeName>
</protein>
<proteinExistence type="inferred from homology"/>
<sequence length="329" mass="34584">MAFGAPRGRGGDRGGFGGRGGSRGGFGGARGGRGGSRGGFGGDRGGRGGSRGGFGGDRGGRGGRGGPRGGARGGRGGARGGARGGAKVVIEPHRHAGVFIARGKEDLLVTRNIAPGESVYGEKRISIEEPSKEEGAAPTKIEYRVWNPFRSKLAAGIMGGIDELGIAPGKKVLYLGAASGTSVSHVADVVGPEGMVYAVEFSHRPGRELIGMAKKRPNVIPIIDDARHPQKYRMLIGMVDAVFADVAQPDQARIIALNSHLFLKDQGTVVISIKANCIDSTVDAETVFAREVQKLREERIKPLEQLTLEPYERDHCIVVGRYVRSGLKK</sequence>
<dbReference type="EC" id="2.1.1.-"/>
<dbReference type="EMBL" id="CR382137">
    <property type="protein sequence ID" value="CAG87922.1"/>
    <property type="molecule type" value="Genomic_DNA"/>
</dbReference>
<dbReference type="RefSeq" id="XP_459686.1">
    <property type="nucleotide sequence ID" value="XM_459686.1"/>
</dbReference>
<dbReference type="SMR" id="Q6BQ34"/>
<dbReference type="FunCoup" id="Q6BQ34">
    <property type="interactions" value="1141"/>
</dbReference>
<dbReference type="STRING" id="284592.Q6BQ34"/>
<dbReference type="GeneID" id="2902407"/>
<dbReference type="KEGG" id="dha:DEHA2E08712g"/>
<dbReference type="VEuPathDB" id="FungiDB:DEHA2E08712g"/>
<dbReference type="eggNOG" id="KOG1596">
    <property type="taxonomic scope" value="Eukaryota"/>
</dbReference>
<dbReference type="HOGENOM" id="CLU_059055_1_0_1"/>
<dbReference type="InParanoid" id="Q6BQ34"/>
<dbReference type="OMA" id="WNPNKSK"/>
<dbReference type="OrthoDB" id="1859733at2759"/>
<dbReference type="Proteomes" id="UP000000599">
    <property type="component" value="Chromosome E"/>
</dbReference>
<dbReference type="GO" id="GO:0031428">
    <property type="term" value="C:box C/D methylation guide snoRNP complex"/>
    <property type="evidence" value="ECO:0007669"/>
    <property type="project" value="EnsemblFungi"/>
</dbReference>
<dbReference type="GO" id="GO:0005730">
    <property type="term" value="C:nucleolus"/>
    <property type="evidence" value="ECO:0007669"/>
    <property type="project" value="UniProtKB-SubCell"/>
</dbReference>
<dbReference type="GO" id="GO:0032040">
    <property type="term" value="C:small-subunit processome"/>
    <property type="evidence" value="ECO:0007669"/>
    <property type="project" value="EnsemblFungi"/>
</dbReference>
<dbReference type="GO" id="GO:1990259">
    <property type="term" value="F:histone H2AQ104 methyltransferase activity"/>
    <property type="evidence" value="ECO:0007669"/>
    <property type="project" value="EnsemblFungi"/>
</dbReference>
<dbReference type="GO" id="GO:0003723">
    <property type="term" value="F:RNA binding"/>
    <property type="evidence" value="ECO:0007669"/>
    <property type="project" value="UniProtKB-KW"/>
</dbReference>
<dbReference type="GO" id="GO:0008649">
    <property type="term" value="F:rRNA methyltransferase activity"/>
    <property type="evidence" value="ECO:0007669"/>
    <property type="project" value="EnsemblFungi"/>
</dbReference>
<dbReference type="GO" id="GO:0000494">
    <property type="term" value="P:box C/D sno(s)RNA 3'-end processing"/>
    <property type="evidence" value="ECO:0007669"/>
    <property type="project" value="EnsemblFungi"/>
</dbReference>
<dbReference type="GO" id="GO:0006356">
    <property type="term" value="P:regulation of transcription by RNA polymerase I"/>
    <property type="evidence" value="ECO:0007669"/>
    <property type="project" value="EnsemblFungi"/>
</dbReference>
<dbReference type="GO" id="GO:0000452">
    <property type="term" value="P:snoRNA guided rRNA 2'-O-methylation"/>
    <property type="evidence" value="ECO:0007669"/>
    <property type="project" value="EnsemblFungi"/>
</dbReference>
<dbReference type="CDD" id="cd02440">
    <property type="entry name" value="AdoMet_MTases"/>
    <property type="match status" value="1"/>
</dbReference>
<dbReference type="FunFam" id="3.30.200.20:FF:000056">
    <property type="entry name" value="Fibrillarin like 1"/>
    <property type="match status" value="1"/>
</dbReference>
<dbReference type="FunFam" id="3.40.50.150:FF:000001">
    <property type="entry name" value="Fibrillarin like 1"/>
    <property type="match status" value="1"/>
</dbReference>
<dbReference type="Gene3D" id="3.30.200.20">
    <property type="entry name" value="Phosphorylase Kinase, domain 1"/>
    <property type="match status" value="1"/>
</dbReference>
<dbReference type="Gene3D" id="3.40.50.150">
    <property type="entry name" value="Vaccinia Virus protein VP39"/>
    <property type="match status" value="1"/>
</dbReference>
<dbReference type="HAMAP" id="MF_00351">
    <property type="entry name" value="RNA_methyltransf_FlpA"/>
    <property type="match status" value="1"/>
</dbReference>
<dbReference type="InterPro" id="IPR000692">
    <property type="entry name" value="Fibrillarin"/>
</dbReference>
<dbReference type="InterPro" id="IPR020813">
    <property type="entry name" value="Fibrillarin_CS"/>
</dbReference>
<dbReference type="InterPro" id="IPR029063">
    <property type="entry name" value="SAM-dependent_MTases_sf"/>
</dbReference>
<dbReference type="NCBIfam" id="NF003276">
    <property type="entry name" value="PRK04266.1-2"/>
    <property type="match status" value="1"/>
</dbReference>
<dbReference type="PANTHER" id="PTHR10335:SF17">
    <property type="entry name" value="FIBRILLARIN"/>
    <property type="match status" value="1"/>
</dbReference>
<dbReference type="PANTHER" id="PTHR10335">
    <property type="entry name" value="RRNA 2-O-METHYLTRANSFERASE FIBRILLARIN"/>
    <property type="match status" value="1"/>
</dbReference>
<dbReference type="Pfam" id="PF01269">
    <property type="entry name" value="Fibrillarin"/>
    <property type="match status" value="1"/>
</dbReference>
<dbReference type="PRINTS" id="PR00052">
    <property type="entry name" value="FIBRILLARIN"/>
</dbReference>
<dbReference type="SMART" id="SM01206">
    <property type="entry name" value="Fibrillarin"/>
    <property type="match status" value="1"/>
</dbReference>
<dbReference type="SUPFAM" id="SSF53335">
    <property type="entry name" value="S-adenosyl-L-methionine-dependent methyltransferases"/>
    <property type="match status" value="1"/>
</dbReference>
<dbReference type="PROSITE" id="PS00566">
    <property type="entry name" value="FIBRILLARIN"/>
    <property type="match status" value="1"/>
</dbReference>
<reference key="1">
    <citation type="journal article" date="2004" name="Nature">
        <title>Genome evolution in yeasts.</title>
        <authorList>
            <person name="Dujon B."/>
            <person name="Sherman D."/>
            <person name="Fischer G."/>
            <person name="Durrens P."/>
            <person name="Casaregola S."/>
            <person name="Lafontaine I."/>
            <person name="de Montigny J."/>
            <person name="Marck C."/>
            <person name="Neuveglise C."/>
            <person name="Talla E."/>
            <person name="Goffard N."/>
            <person name="Frangeul L."/>
            <person name="Aigle M."/>
            <person name="Anthouard V."/>
            <person name="Babour A."/>
            <person name="Barbe V."/>
            <person name="Barnay S."/>
            <person name="Blanchin S."/>
            <person name="Beckerich J.-M."/>
            <person name="Beyne E."/>
            <person name="Bleykasten C."/>
            <person name="Boisrame A."/>
            <person name="Boyer J."/>
            <person name="Cattolico L."/>
            <person name="Confanioleri F."/>
            <person name="de Daruvar A."/>
            <person name="Despons L."/>
            <person name="Fabre E."/>
            <person name="Fairhead C."/>
            <person name="Ferry-Dumazet H."/>
            <person name="Groppi A."/>
            <person name="Hantraye F."/>
            <person name="Hennequin C."/>
            <person name="Jauniaux N."/>
            <person name="Joyet P."/>
            <person name="Kachouri R."/>
            <person name="Kerrest A."/>
            <person name="Koszul R."/>
            <person name="Lemaire M."/>
            <person name="Lesur I."/>
            <person name="Ma L."/>
            <person name="Muller H."/>
            <person name="Nicaud J.-M."/>
            <person name="Nikolski M."/>
            <person name="Oztas S."/>
            <person name="Ozier-Kalogeropoulos O."/>
            <person name="Pellenz S."/>
            <person name="Potier S."/>
            <person name="Richard G.-F."/>
            <person name="Straub M.-L."/>
            <person name="Suleau A."/>
            <person name="Swennen D."/>
            <person name="Tekaia F."/>
            <person name="Wesolowski-Louvel M."/>
            <person name="Westhof E."/>
            <person name="Wirth B."/>
            <person name="Zeniou-Meyer M."/>
            <person name="Zivanovic Y."/>
            <person name="Bolotin-Fukuhara M."/>
            <person name="Thierry A."/>
            <person name="Bouchier C."/>
            <person name="Caudron B."/>
            <person name="Scarpelli C."/>
            <person name="Gaillardin C."/>
            <person name="Weissenbach J."/>
            <person name="Wincker P."/>
            <person name="Souciet J.-L."/>
        </authorList>
    </citation>
    <scope>NUCLEOTIDE SEQUENCE [LARGE SCALE GENOMIC DNA]</scope>
    <source>
        <strain>ATCC 36239 / CBS 767 / BCRC 21394 / JCM 1990 / NBRC 0083 / IGC 2968</strain>
    </source>
</reference>
<accession>Q6BQ34</accession>